<sequence length="251" mass="28667">MDKEREKQVYLARLAEQAERYDEMVEAMKTVAKMDVELTVEERNLVSVGYKNVIGARRASWRILSSIEQKEESKGHDQNVKRIKTYQQRVEDELTKYALTLSVIDEHVVPSSTSGESTVFYYKMKGDYYRYLAEFKSGDDRKEAADQSLKAYEAATATASADLAPTHPIRLGLALNFSVFYYEILNSPERACHLAKQAFDEAIAELDSLSEESYKDSTLIMQLLRDNFTLWTSDLEEGGEHSKGDERQGEN</sequence>
<accession>Q41246</accession>
<feature type="chain" id="PRO_0000058706" description="14-3-3-like protein">
    <location>
        <begin position="1"/>
        <end position="251"/>
    </location>
</feature>
<comment type="tissue specificity">
    <text>Most abundant in roots and flowers.</text>
</comment>
<comment type="similarity">
    <text evidence="1">Belongs to the 14-3-3 family.</text>
</comment>
<keyword id="KW-1185">Reference proteome</keyword>
<proteinExistence type="evidence at transcript level"/>
<reference key="1">
    <citation type="journal article" date="1994" name="Plant J.">
        <title>A NaCl-regulated plant gene encoding a brain protein homology that activates ADP ribosyltransferase and inhibits protein kinase C.</title>
        <authorList>
            <person name="Chen Z."/>
            <person name="Fu H."/>
            <person name="Liu D."/>
            <person name="Chang P.F."/>
            <person name="Narasimhan M."/>
            <person name="Ferl R."/>
            <person name="Hasegawa P.M."/>
            <person name="Bressan R.A."/>
        </authorList>
    </citation>
    <scope>NUCLEOTIDE SEQUENCE [MRNA]</scope>
    <source>
        <strain>cv. Wisconsin 38</strain>
    </source>
</reference>
<evidence type="ECO:0000305" key="1"/>
<protein>
    <recommendedName>
        <fullName>14-3-3-like protein</fullName>
    </recommendedName>
</protein>
<organism>
    <name type="scientific">Nicotiana tabacum</name>
    <name type="common">Common tobacco</name>
    <dbReference type="NCBI Taxonomy" id="4097"/>
    <lineage>
        <taxon>Eukaryota</taxon>
        <taxon>Viridiplantae</taxon>
        <taxon>Streptophyta</taxon>
        <taxon>Embryophyta</taxon>
        <taxon>Tracheophyta</taxon>
        <taxon>Spermatophyta</taxon>
        <taxon>Magnoliopsida</taxon>
        <taxon>eudicotyledons</taxon>
        <taxon>Gunneridae</taxon>
        <taxon>Pentapetalae</taxon>
        <taxon>asterids</taxon>
        <taxon>lamiids</taxon>
        <taxon>Solanales</taxon>
        <taxon>Solanaceae</taxon>
        <taxon>Nicotianoideae</taxon>
        <taxon>Nicotianeae</taxon>
        <taxon>Nicotiana</taxon>
    </lineage>
</organism>
<dbReference type="EMBL" id="S76737">
    <property type="protein sequence ID" value="AAB32832.1"/>
    <property type="molecule type" value="mRNA"/>
</dbReference>
<dbReference type="PIR" id="T04101">
    <property type="entry name" value="T04101"/>
</dbReference>
<dbReference type="RefSeq" id="NP_001312306.1">
    <property type="nucleotide sequence ID" value="NM_001325377.1"/>
</dbReference>
<dbReference type="SMR" id="Q41246"/>
<dbReference type="MINT" id="Q41246"/>
<dbReference type="STRING" id="4097.Q41246"/>
<dbReference type="PaxDb" id="4097-Q41246"/>
<dbReference type="GeneID" id="107784347"/>
<dbReference type="KEGG" id="nta:107784347"/>
<dbReference type="OrthoDB" id="10260625at2759"/>
<dbReference type="Proteomes" id="UP000084051">
    <property type="component" value="Unplaced"/>
</dbReference>
<dbReference type="GO" id="GO:0005737">
    <property type="term" value="C:cytoplasm"/>
    <property type="evidence" value="ECO:0000318"/>
    <property type="project" value="GO_Central"/>
</dbReference>
<dbReference type="GO" id="GO:0008104">
    <property type="term" value="P:protein localization"/>
    <property type="evidence" value="ECO:0000318"/>
    <property type="project" value="GO_Central"/>
</dbReference>
<dbReference type="GO" id="GO:0007165">
    <property type="term" value="P:signal transduction"/>
    <property type="evidence" value="ECO:0000318"/>
    <property type="project" value="GO_Central"/>
</dbReference>
<dbReference type="FunFam" id="1.20.190.20:FF:000002">
    <property type="entry name" value="14-3-3 protein epsilon"/>
    <property type="match status" value="1"/>
</dbReference>
<dbReference type="Gene3D" id="1.20.190.20">
    <property type="entry name" value="14-3-3 domain"/>
    <property type="match status" value="1"/>
</dbReference>
<dbReference type="InterPro" id="IPR000308">
    <property type="entry name" value="14-3-3"/>
</dbReference>
<dbReference type="InterPro" id="IPR023409">
    <property type="entry name" value="14-3-3_CS"/>
</dbReference>
<dbReference type="InterPro" id="IPR036815">
    <property type="entry name" value="14-3-3_dom_sf"/>
</dbReference>
<dbReference type="InterPro" id="IPR023410">
    <property type="entry name" value="14-3-3_domain"/>
</dbReference>
<dbReference type="PANTHER" id="PTHR18860">
    <property type="entry name" value="14-3-3 PROTEIN"/>
    <property type="match status" value="1"/>
</dbReference>
<dbReference type="Pfam" id="PF00244">
    <property type="entry name" value="14-3-3"/>
    <property type="match status" value="1"/>
</dbReference>
<dbReference type="PIRSF" id="PIRSF000868">
    <property type="entry name" value="14-3-3"/>
    <property type="match status" value="1"/>
</dbReference>
<dbReference type="PRINTS" id="PR00305">
    <property type="entry name" value="1433ZETA"/>
</dbReference>
<dbReference type="SMART" id="SM00101">
    <property type="entry name" value="14_3_3"/>
    <property type="match status" value="1"/>
</dbReference>
<dbReference type="SUPFAM" id="SSF48445">
    <property type="entry name" value="14-3-3 protein"/>
    <property type="match status" value="1"/>
</dbReference>
<dbReference type="PROSITE" id="PS00796">
    <property type="entry name" value="1433_1"/>
    <property type="match status" value="1"/>
</dbReference>
<dbReference type="PROSITE" id="PS00797">
    <property type="entry name" value="1433_2"/>
    <property type="match status" value="1"/>
</dbReference>
<name>1433_TOBAC</name>